<proteinExistence type="inferred from homology"/>
<comment type="function">
    <text evidence="1">Catalyzes the conversion of glucosamine-6-phosphate to glucosamine-1-phosphate.</text>
</comment>
<comment type="catalytic activity">
    <reaction evidence="1">
        <text>alpha-D-glucosamine 1-phosphate = D-glucosamine 6-phosphate</text>
        <dbReference type="Rhea" id="RHEA:23424"/>
        <dbReference type="ChEBI" id="CHEBI:58516"/>
        <dbReference type="ChEBI" id="CHEBI:58725"/>
        <dbReference type="EC" id="5.4.2.10"/>
    </reaction>
</comment>
<comment type="cofactor">
    <cofactor evidence="1">
        <name>Mg(2+)</name>
        <dbReference type="ChEBI" id="CHEBI:18420"/>
    </cofactor>
    <text evidence="1">Binds 1 Mg(2+) ion per subunit.</text>
</comment>
<comment type="PTM">
    <text evidence="1">Activated by phosphorylation.</text>
</comment>
<comment type="similarity">
    <text evidence="1">Belongs to the phosphohexose mutase family.</text>
</comment>
<gene>
    <name evidence="1" type="primary">glmM</name>
    <name type="ordered locus">CGSHiEE_04920</name>
</gene>
<protein>
    <recommendedName>
        <fullName evidence="1">Phosphoglucosamine mutase</fullName>
        <ecNumber evidence="1">5.4.2.10</ecNumber>
    </recommendedName>
</protein>
<name>GLMM_HAEIE</name>
<feature type="chain" id="PRO_0000305640" description="Phosphoglucosamine mutase">
    <location>
        <begin position="1"/>
        <end position="445"/>
    </location>
</feature>
<feature type="active site" description="Phosphoserine intermediate" evidence="1">
    <location>
        <position position="102"/>
    </location>
</feature>
<feature type="binding site" description="via phosphate group" evidence="1">
    <location>
        <position position="102"/>
    </location>
    <ligand>
        <name>Mg(2+)</name>
        <dbReference type="ChEBI" id="CHEBI:18420"/>
    </ligand>
</feature>
<feature type="binding site" evidence="1">
    <location>
        <position position="241"/>
    </location>
    <ligand>
        <name>Mg(2+)</name>
        <dbReference type="ChEBI" id="CHEBI:18420"/>
    </ligand>
</feature>
<feature type="binding site" evidence="1">
    <location>
        <position position="243"/>
    </location>
    <ligand>
        <name>Mg(2+)</name>
        <dbReference type="ChEBI" id="CHEBI:18420"/>
    </ligand>
</feature>
<feature type="binding site" evidence="1">
    <location>
        <position position="245"/>
    </location>
    <ligand>
        <name>Mg(2+)</name>
        <dbReference type="ChEBI" id="CHEBI:18420"/>
    </ligand>
</feature>
<feature type="modified residue" description="Phosphoserine" evidence="1">
    <location>
        <position position="102"/>
    </location>
</feature>
<organism>
    <name type="scientific">Haemophilus influenzae (strain PittEE)</name>
    <dbReference type="NCBI Taxonomy" id="374930"/>
    <lineage>
        <taxon>Bacteria</taxon>
        <taxon>Pseudomonadati</taxon>
        <taxon>Pseudomonadota</taxon>
        <taxon>Gammaproteobacteria</taxon>
        <taxon>Pasteurellales</taxon>
        <taxon>Pasteurellaceae</taxon>
        <taxon>Haemophilus</taxon>
    </lineage>
</organism>
<dbReference type="EC" id="5.4.2.10" evidence="1"/>
<dbReference type="EMBL" id="CP000671">
    <property type="protein sequence ID" value="ABQ98377.1"/>
    <property type="molecule type" value="Genomic_DNA"/>
</dbReference>
<dbReference type="SMR" id="A5UC76"/>
<dbReference type="KEGG" id="hip:CGSHiEE_04920"/>
<dbReference type="HOGENOM" id="CLU_016950_7_0_6"/>
<dbReference type="GO" id="GO:0005829">
    <property type="term" value="C:cytosol"/>
    <property type="evidence" value="ECO:0007669"/>
    <property type="project" value="TreeGrafter"/>
</dbReference>
<dbReference type="GO" id="GO:0000287">
    <property type="term" value="F:magnesium ion binding"/>
    <property type="evidence" value="ECO:0007669"/>
    <property type="project" value="UniProtKB-UniRule"/>
</dbReference>
<dbReference type="GO" id="GO:0008966">
    <property type="term" value="F:phosphoglucosamine mutase activity"/>
    <property type="evidence" value="ECO:0007669"/>
    <property type="project" value="UniProtKB-UniRule"/>
</dbReference>
<dbReference type="GO" id="GO:0004615">
    <property type="term" value="F:phosphomannomutase activity"/>
    <property type="evidence" value="ECO:0007669"/>
    <property type="project" value="TreeGrafter"/>
</dbReference>
<dbReference type="GO" id="GO:0005975">
    <property type="term" value="P:carbohydrate metabolic process"/>
    <property type="evidence" value="ECO:0007669"/>
    <property type="project" value="InterPro"/>
</dbReference>
<dbReference type="GO" id="GO:0009252">
    <property type="term" value="P:peptidoglycan biosynthetic process"/>
    <property type="evidence" value="ECO:0007669"/>
    <property type="project" value="TreeGrafter"/>
</dbReference>
<dbReference type="GO" id="GO:0006048">
    <property type="term" value="P:UDP-N-acetylglucosamine biosynthetic process"/>
    <property type="evidence" value="ECO:0007669"/>
    <property type="project" value="TreeGrafter"/>
</dbReference>
<dbReference type="CDD" id="cd05802">
    <property type="entry name" value="GlmM"/>
    <property type="match status" value="1"/>
</dbReference>
<dbReference type="FunFam" id="3.30.310.50:FF:000001">
    <property type="entry name" value="Phosphoglucosamine mutase"/>
    <property type="match status" value="1"/>
</dbReference>
<dbReference type="FunFam" id="3.40.120.10:FF:000001">
    <property type="entry name" value="Phosphoglucosamine mutase"/>
    <property type="match status" value="1"/>
</dbReference>
<dbReference type="FunFam" id="3.40.120.10:FF:000003">
    <property type="entry name" value="Phosphoglucosamine mutase"/>
    <property type="match status" value="1"/>
</dbReference>
<dbReference type="Gene3D" id="3.40.120.10">
    <property type="entry name" value="Alpha-D-Glucose-1,6-Bisphosphate, subunit A, domain 3"/>
    <property type="match status" value="3"/>
</dbReference>
<dbReference type="Gene3D" id="3.30.310.50">
    <property type="entry name" value="Alpha-D-phosphohexomutase, C-terminal domain"/>
    <property type="match status" value="1"/>
</dbReference>
<dbReference type="HAMAP" id="MF_01554_B">
    <property type="entry name" value="GlmM_B"/>
    <property type="match status" value="1"/>
</dbReference>
<dbReference type="InterPro" id="IPR005844">
    <property type="entry name" value="A-D-PHexomutase_a/b/a-I"/>
</dbReference>
<dbReference type="InterPro" id="IPR016055">
    <property type="entry name" value="A-D-PHexomutase_a/b/a-I/II/III"/>
</dbReference>
<dbReference type="InterPro" id="IPR005845">
    <property type="entry name" value="A-D-PHexomutase_a/b/a-II"/>
</dbReference>
<dbReference type="InterPro" id="IPR005846">
    <property type="entry name" value="A-D-PHexomutase_a/b/a-III"/>
</dbReference>
<dbReference type="InterPro" id="IPR005843">
    <property type="entry name" value="A-D-PHexomutase_C"/>
</dbReference>
<dbReference type="InterPro" id="IPR036900">
    <property type="entry name" value="A-D-PHexomutase_C_sf"/>
</dbReference>
<dbReference type="InterPro" id="IPR016066">
    <property type="entry name" value="A-D-PHexomutase_CS"/>
</dbReference>
<dbReference type="InterPro" id="IPR005841">
    <property type="entry name" value="Alpha-D-phosphohexomutase_SF"/>
</dbReference>
<dbReference type="InterPro" id="IPR006352">
    <property type="entry name" value="GlmM_bact"/>
</dbReference>
<dbReference type="InterPro" id="IPR050060">
    <property type="entry name" value="Phosphoglucosamine_mutase"/>
</dbReference>
<dbReference type="NCBIfam" id="TIGR01455">
    <property type="entry name" value="glmM"/>
    <property type="match status" value="1"/>
</dbReference>
<dbReference type="NCBIfam" id="NF008139">
    <property type="entry name" value="PRK10887.1"/>
    <property type="match status" value="1"/>
</dbReference>
<dbReference type="PANTHER" id="PTHR42946:SF1">
    <property type="entry name" value="PHOSPHOGLUCOMUTASE (ALPHA-D-GLUCOSE-1,6-BISPHOSPHATE-DEPENDENT)"/>
    <property type="match status" value="1"/>
</dbReference>
<dbReference type="PANTHER" id="PTHR42946">
    <property type="entry name" value="PHOSPHOHEXOSE MUTASE"/>
    <property type="match status" value="1"/>
</dbReference>
<dbReference type="Pfam" id="PF02878">
    <property type="entry name" value="PGM_PMM_I"/>
    <property type="match status" value="1"/>
</dbReference>
<dbReference type="Pfam" id="PF02879">
    <property type="entry name" value="PGM_PMM_II"/>
    <property type="match status" value="1"/>
</dbReference>
<dbReference type="Pfam" id="PF02880">
    <property type="entry name" value="PGM_PMM_III"/>
    <property type="match status" value="1"/>
</dbReference>
<dbReference type="Pfam" id="PF00408">
    <property type="entry name" value="PGM_PMM_IV"/>
    <property type="match status" value="1"/>
</dbReference>
<dbReference type="PRINTS" id="PR00509">
    <property type="entry name" value="PGMPMM"/>
</dbReference>
<dbReference type="SUPFAM" id="SSF55957">
    <property type="entry name" value="Phosphoglucomutase, C-terminal domain"/>
    <property type="match status" value="1"/>
</dbReference>
<dbReference type="SUPFAM" id="SSF53738">
    <property type="entry name" value="Phosphoglucomutase, first 3 domains"/>
    <property type="match status" value="3"/>
</dbReference>
<dbReference type="PROSITE" id="PS00710">
    <property type="entry name" value="PGM_PMM"/>
    <property type="match status" value="1"/>
</dbReference>
<evidence type="ECO:0000255" key="1">
    <source>
        <dbReference type="HAMAP-Rule" id="MF_01554"/>
    </source>
</evidence>
<keyword id="KW-0413">Isomerase</keyword>
<keyword id="KW-0460">Magnesium</keyword>
<keyword id="KW-0479">Metal-binding</keyword>
<keyword id="KW-0597">Phosphoprotein</keyword>
<sequence length="445" mass="47451">MANRKYFGTDGVRGKVGAYPITPDFALKLGWAAGKVLSSQGSKMVLIGKDTRISGYMLESALEAGLAAAGLSAAFTGPMPTPAIAYLTRTFRAEAGIVISASHNPYYDNGIKFFSAKGTKLPDEIEEAIEAMLEQPMDCVESAELGKASRINDAAGRYIEFCKGTFPAHLGLEGYKIVIDCANGATYHIAPNVFRELGAEVIEIGTDPNGLNINEKCGATDVTALQAKVVETKADVGLAYDGDGDRIMMVDHLGNKVDGDQILFIIAREALRSGQLKGGVVGTLMSNMSLEIALKMLGVPFLRANVGDRYVLEKMLENDWTLGGENSGHIIIADKNTTGDGIVASLAVLAAMAQHKLSLNELASAVKLFPQVLINVRFAGGENPLESDAVKSVAAEVEKRLEGKGRILLRKSGTEPLIRVMVECQDAELAQQCAEEIAEAVKKIN</sequence>
<accession>A5UC76</accession>
<reference key="1">
    <citation type="journal article" date="2007" name="Genome Biol.">
        <title>Characterization and modeling of the Haemophilus influenzae core and supragenomes based on the complete genomic sequences of Rd and 12 clinical nontypeable strains.</title>
        <authorList>
            <person name="Hogg J.S."/>
            <person name="Hu F.Z."/>
            <person name="Janto B."/>
            <person name="Boissy R."/>
            <person name="Hayes J."/>
            <person name="Keefe R."/>
            <person name="Post J.C."/>
            <person name="Ehrlich G.D."/>
        </authorList>
    </citation>
    <scope>NUCLEOTIDE SEQUENCE [LARGE SCALE GENOMIC DNA]</scope>
    <source>
        <strain>PittEE</strain>
    </source>
</reference>